<accession>Q3B0W2</accession>
<proteinExistence type="inferred from homology"/>
<dbReference type="EC" id="2.1.1.195" evidence="1"/>
<dbReference type="EMBL" id="CP000097">
    <property type="protein sequence ID" value="ABB25016.1"/>
    <property type="molecule type" value="Genomic_DNA"/>
</dbReference>
<dbReference type="RefSeq" id="WP_011358884.1">
    <property type="nucleotide sequence ID" value="NC_007513.1"/>
</dbReference>
<dbReference type="SMR" id="Q3B0W2"/>
<dbReference type="STRING" id="316279.Syncc9902_0041"/>
<dbReference type="KEGG" id="sye:Syncc9902_0041"/>
<dbReference type="eggNOG" id="COG1903">
    <property type="taxonomic scope" value="Bacteria"/>
</dbReference>
<dbReference type="HOGENOM" id="CLU_041273_1_2_3"/>
<dbReference type="OrthoDB" id="6439987at2"/>
<dbReference type="UniPathway" id="UPA00148">
    <property type="reaction ID" value="UER00227"/>
</dbReference>
<dbReference type="Proteomes" id="UP000002712">
    <property type="component" value="Chromosome"/>
</dbReference>
<dbReference type="GO" id="GO:0043780">
    <property type="term" value="F:cobalt-precorrin-5B C1-methyltransferase activity"/>
    <property type="evidence" value="ECO:0007669"/>
    <property type="project" value="RHEA"/>
</dbReference>
<dbReference type="GO" id="GO:0019251">
    <property type="term" value="P:anaerobic cobalamin biosynthetic process"/>
    <property type="evidence" value="ECO:0007669"/>
    <property type="project" value="UniProtKB-UniRule"/>
</dbReference>
<dbReference type="GO" id="GO:0032259">
    <property type="term" value="P:methylation"/>
    <property type="evidence" value="ECO:0007669"/>
    <property type="project" value="UniProtKB-KW"/>
</dbReference>
<dbReference type="Gene3D" id="3.30.2110.10">
    <property type="entry name" value="CbiD-like"/>
    <property type="match status" value="1"/>
</dbReference>
<dbReference type="HAMAP" id="MF_00787">
    <property type="entry name" value="CbiD"/>
    <property type="match status" value="1"/>
</dbReference>
<dbReference type="InterPro" id="IPR002748">
    <property type="entry name" value="CbiD"/>
</dbReference>
<dbReference type="InterPro" id="IPR036074">
    <property type="entry name" value="CbiD_sf"/>
</dbReference>
<dbReference type="NCBIfam" id="TIGR00312">
    <property type="entry name" value="cbiD"/>
    <property type="match status" value="1"/>
</dbReference>
<dbReference type="PANTHER" id="PTHR35863">
    <property type="entry name" value="COBALT-PRECORRIN-5B C(1)-METHYLTRANSFERASE"/>
    <property type="match status" value="1"/>
</dbReference>
<dbReference type="PANTHER" id="PTHR35863:SF1">
    <property type="entry name" value="COBALT-PRECORRIN-5B C(1)-METHYLTRANSFERASE"/>
    <property type="match status" value="1"/>
</dbReference>
<dbReference type="Pfam" id="PF01888">
    <property type="entry name" value="CbiD"/>
    <property type="match status" value="1"/>
</dbReference>
<dbReference type="PIRSF" id="PIRSF026782">
    <property type="entry name" value="CbiD"/>
    <property type="match status" value="1"/>
</dbReference>
<dbReference type="SUPFAM" id="SSF111342">
    <property type="entry name" value="CbiD-like"/>
    <property type="match status" value="1"/>
</dbReference>
<feature type="chain" id="PRO_0000257781" description="Cobalt-precorrin-5B C(1)-methyltransferase">
    <location>
        <begin position="1"/>
        <end position="362"/>
    </location>
</feature>
<organism>
    <name type="scientific">Synechococcus sp. (strain CC9902)</name>
    <dbReference type="NCBI Taxonomy" id="316279"/>
    <lineage>
        <taxon>Bacteria</taxon>
        <taxon>Bacillati</taxon>
        <taxon>Cyanobacteriota</taxon>
        <taxon>Cyanophyceae</taxon>
        <taxon>Synechococcales</taxon>
        <taxon>Synechococcaceae</taxon>
        <taxon>Synechococcus</taxon>
    </lineage>
</organism>
<protein>
    <recommendedName>
        <fullName evidence="1">Cobalt-precorrin-5B C(1)-methyltransferase</fullName>
        <ecNumber evidence="1">2.1.1.195</ecNumber>
    </recommendedName>
    <alternativeName>
        <fullName evidence="1">Cobalt-precorrin-6A synthase</fullName>
    </alternativeName>
</protein>
<reference key="1">
    <citation type="submission" date="2005-08" db="EMBL/GenBank/DDBJ databases">
        <title>Complete sequence of Synechococcus sp. CC9902.</title>
        <authorList>
            <person name="Copeland A."/>
            <person name="Lucas S."/>
            <person name="Lapidus A."/>
            <person name="Barry K."/>
            <person name="Detter J.C."/>
            <person name="Glavina T."/>
            <person name="Hammon N."/>
            <person name="Israni S."/>
            <person name="Pitluck S."/>
            <person name="Martinez M."/>
            <person name="Schmutz J."/>
            <person name="Larimer F."/>
            <person name="Land M."/>
            <person name="Kyrpides N."/>
            <person name="Ivanova N."/>
            <person name="Richardson P."/>
        </authorList>
    </citation>
    <scope>NUCLEOTIDE SEQUENCE [LARGE SCALE GENOMIC DNA]</scope>
    <source>
        <strain>CC9902</strain>
    </source>
</reference>
<sequence>MSSGLTLPVWVAAAAKASLHALLGQPFAAQASVSLPDRPAPLLVPVISAARLDGGEQALAISRCDPGPGLDLTRDLEIWVRVSWTPDKQAGLTLLAGAGVGTRGAGGDLCVSAYARDLLERNLLPLDRGLTVEVVLPKGRELALRTSNAAFGVVDGLALIGTQAEVQRSAAPDQLKQVLLDLAQLTGDPEFRGDLILVIGENGLDLARQAQLAPLLKVGNWLGPVLVAAAEAGVQNLLLLGYHGKLIKLAGGIFHTHHHLADGRLEVLTALGFDAGLSLQQLRLLRHAQSVEQAFKALAAVNPAMAEQLGQQLALAVEQRSQAYVARYGDWPMRIGAVLFDRNRHLRWRGPVAGERFFTLMD</sequence>
<keyword id="KW-0169">Cobalamin biosynthesis</keyword>
<keyword id="KW-0489">Methyltransferase</keyword>
<keyword id="KW-1185">Reference proteome</keyword>
<keyword id="KW-0949">S-adenosyl-L-methionine</keyword>
<keyword id="KW-0808">Transferase</keyword>
<gene>
    <name evidence="1" type="primary">cbiD</name>
    <name type="ordered locus">Syncc9902_0041</name>
</gene>
<evidence type="ECO:0000255" key="1">
    <source>
        <dbReference type="HAMAP-Rule" id="MF_00787"/>
    </source>
</evidence>
<comment type="function">
    <text evidence="1">Catalyzes the methylation of C-1 in cobalt-precorrin-5B to form cobalt-precorrin-6A.</text>
</comment>
<comment type="catalytic activity">
    <reaction evidence="1">
        <text>Co-precorrin-5B + S-adenosyl-L-methionine = Co-precorrin-6A + S-adenosyl-L-homocysteine</text>
        <dbReference type="Rhea" id="RHEA:26285"/>
        <dbReference type="ChEBI" id="CHEBI:57856"/>
        <dbReference type="ChEBI" id="CHEBI:59789"/>
        <dbReference type="ChEBI" id="CHEBI:60063"/>
        <dbReference type="ChEBI" id="CHEBI:60064"/>
        <dbReference type="EC" id="2.1.1.195"/>
    </reaction>
</comment>
<comment type="pathway">
    <text evidence="1">Cofactor biosynthesis; adenosylcobalamin biosynthesis; cob(II)yrinate a,c-diamide from sirohydrochlorin (anaerobic route): step 6/10.</text>
</comment>
<comment type="similarity">
    <text evidence="1">Belongs to the CbiD family.</text>
</comment>
<name>CBID_SYNS9</name>